<protein>
    <recommendedName>
        <fullName>SUMO-activating enzyme subunit 2-B</fullName>
        <ecNumber>2.3.2.-</ecNumber>
    </recommendedName>
    <alternativeName>
        <fullName>Ubiquitin-like 1-activating enzyme E1B-B</fullName>
    </alternativeName>
    <alternativeName>
        <fullName>Ubiquitin-like modifier-activating enzyme 2-B</fullName>
    </alternativeName>
</protein>
<keyword id="KW-0067">ATP-binding</keyword>
<keyword id="KW-0479">Metal-binding</keyword>
<keyword id="KW-0547">Nucleotide-binding</keyword>
<keyword id="KW-0539">Nucleus</keyword>
<keyword id="KW-1185">Reference proteome</keyword>
<keyword id="KW-0808">Transferase</keyword>
<keyword id="KW-0833">Ubl conjugation pathway</keyword>
<keyword id="KW-0862">Zinc</keyword>
<proteinExistence type="evidence at transcript level"/>
<reference key="1">
    <citation type="submission" date="2003-01" db="EMBL/GenBank/DDBJ databases">
        <authorList>
            <consortium name="NIH - Xenopus Gene Collection (XGC) project"/>
        </authorList>
    </citation>
    <scope>NUCLEOTIDE SEQUENCE [LARGE SCALE MRNA]</scope>
    <source>
        <tissue>Embryo</tissue>
    </source>
</reference>
<gene>
    <name type="primary">uba2-b</name>
    <name type="synonym">sae2-b</name>
    <name type="synonym">uble1b-b</name>
</gene>
<sequence>MAVIGALPKEVAEAVSASRLLVVGAGGIGCELLKNLVLTGFTNLDVIDLDTIDVSNLNRQFLFQKKHVGRSKAQVAKESVLQFCPDASITAYHDSIMNPDYNVEFFKQFTMAMNALDNNAARNHVNRMCLAAGIPLIESGTAGYLGQVSVIKKGVTECYECQPKPTQKTFPGCTIRNTPSEPIHCIVWAKYLFNQLFGEEDADQEVAPDIADPEAAWDPTKAAERANASNVDGDIKRVSTKQWAKSTGYDPIKLFNKLFRDDIKYLLTMDRLWRKRKPPIPLEWASLHNKENCSEIQNESSLLGLKDQKVLNVASYAQLFSKSVETLREQLREKGDGAELVWDKDDVPAMDFVTAAANLRMHIFSMNMKSKFDVKSMAGNIIPAIATTNAVISGLIVLEGLKILSGNTEQCRTVFLNKQPNPRKKLLVPCSLDPPNPSCYVCAIKPEVTVKLNVHKVTVQMLQDKILKEKFAMVAPDVQIEDGKGTILISSEAGETDANNHRKISEFGIRNSSQLQADDFLQDYTLMMNILHSDEMEKDVDFEVVGDVPEKGPQKPPEESVKNITNGSDDGAQPSTSKAQDQDDVLIVDSDEESPSSSNADVGMESASLKRKLPDEEAVSSTKRKRIEPPVEEDDDIIALD</sequence>
<organism>
    <name type="scientific">Xenopus laevis</name>
    <name type="common">African clawed frog</name>
    <dbReference type="NCBI Taxonomy" id="8355"/>
    <lineage>
        <taxon>Eukaryota</taxon>
        <taxon>Metazoa</taxon>
        <taxon>Chordata</taxon>
        <taxon>Craniata</taxon>
        <taxon>Vertebrata</taxon>
        <taxon>Euteleostomi</taxon>
        <taxon>Amphibia</taxon>
        <taxon>Batrachia</taxon>
        <taxon>Anura</taxon>
        <taxon>Pipoidea</taxon>
        <taxon>Pipidae</taxon>
        <taxon>Xenopodinae</taxon>
        <taxon>Xenopus</taxon>
        <taxon>Xenopus</taxon>
    </lineage>
</organism>
<name>SAE2B_XENLA</name>
<dbReference type="EC" id="2.3.2.-"/>
<dbReference type="EMBL" id="BC043962">
    <property type="protein sequence ID" value="AAH43962.2"/>
    <property type="molecule type" value="mRNA"/>
</dbReference>
<dbReference type="SMR" id="Q7ZY60"/>
<dbReference type="AGR" id="Xenbase:XB-GENE-977715"/>
<dbReference type="Xenbase" id="XB-GENE-977715">
    <property type="gene designation" value="uba2.L"/>
</dbReference>
<dbReference type="UniPathway" id="UPA00886"/>
<dbReference type="Proteomes" id="UP000186698">
    <property type="component" value="Unplaced"/>
</dbReference>
<dbReference type="GO" id="GO:0005737">
    <property type="term" value="C:cytoplasm"/>
    <property type="evidence" value="ECO:0000318"/>
    <property type="project" value="GO_Central"/>
</dbReference>
<dbReference type="GO" id="GO:0031510">
    <property type="term" value="C:SUMO activating enzyme complex"/>
    <property type="evidence" value="ECO:0000250"/>
    <property type="project" value="UniProtKB"/>
</dbReference>
<dbReference type="GO" id="GO:0005524">
    <property type="term" value="F:ATP binding"/>
    <property type="evidence" value="ECO:0007669"/>
    <property type="project" value="UniProtKB-KW"/>
</dbReference>
<dbReference type="GO" id="GO:0046872">
    <property type="term" value="F:metal ion binding"/>
    <property type="evidence" value="ECO:0007669"/>
    <property type="project" value="UniProtKB-KW"/>
</dbReference>
<dbReference type="GO" id="GO:0019948">
    <property type="term" value="F:SUMO activating enzyme activity"/>
    <property type="evidence" value="ECO:0000250"/>
    <property type="project" value="UniProtKB"/>
</dbReference>
<dbReference type="GO" id="GO:0016740">
    <property type="term" value="F:transferase activity"/>
    <property type="evidence" value="ECO:0007669"/>
    <property type="project" value="UniProtKB-KW"/>
</dbReference>
<dbReference type="GO" id="GO:0016925">
    <property type="term" value="P:protein sumoylation"/>
    <property type="evidence" value="ECO:0000250"/>
    <property type="project" value="UniProtKB"/>
</dbReference>
<dbReference type="CDD" id="cd01489">
    <property type="entry name" value="Uba2_SUMO"/>
    <property type="match status" value="1"/>
</dbReference>
<dbReference type="FunFam" id="1.10.10.520:FF:000002">
    <property type="entry name" value="SUMO-activating enzyme subunit 2"/>
    <property type="match status" value="1"/>
</dbReference>
<dbReference type="FunFam" id="3.10.290.20:FF:000002">
    <property type="entry name" value="SUMO-activating enzyme subunit 2"/>
    <property type="match status" value="1"/>
</dbReference>
<dbReference type="FunFam" id="3.40.50.720:FF:000618">
    <property type="entry name" value="SUMO-activating enzyme subunit 2"/>
    <property type="match status" value="1"/>
</dbReference>
<dbReference type="FunFam" id="3.50.50.80:FF:000002">
    <property type="entry name" value="SUMO-activating enzyme subunit 2"/>
    <property type="match status" value="1"/>
</dbReference>
<dbReference type="Gene3D" id="1.10.10.520">
    <property type="entry name" value="Ubiquitin activating enzymes (Uba3). Chain: B, domain 2"/>
    <property type="match status" value="1"/>
</dbReference>
<dbReference type="Gene3D" id="3.50.50.80">
    <property type="entry name" value="Ubiquitin-activating enzyme E1, inactive adenylation domain, subdomain 1"/>
    <property type="match status" value="1"/>
</dbReference>
<dbReference type="Gene3D" id="3.10.290.20">
    <property type="entry name" value="Ubiquitin-like 2 activating enzyme e1b. Chain: B, domain 3"/>
    <property type="match status" value="1"/>
</dbReference>
<dbReference type="InterPro" id="IPR045886">
    <property type="entry name" value="ThiF/MoeB/HesA"/>
</dbReference>
<dbReference type="InterPro" id="IPR000594">
    <property type="entry name" value="ThiF_NAD_FAD-bd"/>
</dbReference>
<dbReference type="InterPro" id="IPR028077">
    <property type="entry name" value="UAE_UbL_dom"/>
</dbReference>
<dbReference type="InterPro" id="IPR042449">
    <property type="entry name" value="Ub-E1_IAD_1"/>
</dbReference>
<dbReference type="InterPro" id="IPR023318">
    <property type="entry name" value="Ub_act_enz_dom_a_sf"/>
</dbReference>
<dbReference type="InterPro" id="IPR030661">
    <property type="entry name" value="Uba2"/>
</dbReference>
<dbReference type="InterPro" id="IPR032426">
    <property type="entry name" value="UBA2_C"/>
</dbReference>
<dbReference type="InterPro" id="IPR035985">
    <property type="entry name" value="Ubiquitin-activating_enz"/>
</dbReference>
<dbReference type="InterPro" id="IPR033127">
    <property type="entry name" value="UBQ-activ_enz_E1_Cys_AS"/>
</dbReference>
<dbReference type="PANTHER" id="PTHR10953:SF5">
    <property type="entry name" value="SUMO-ACTIVATING ENZYME SUBUNIT 2"/>
    <property type="match status" value="1"/>
</dbReference>
<dbReference type="PANTHER" id="PTHR10953">
    <property type="entry name" value="UBIQUITIN-ACTIVATING ENZYME E1"/>
    <property type="match status" value="1"/>
</dbReference>
<dbReference type="Pfam" id="PF00899">
    <property type="entry name" value="ThiF"/>
    <property type="match status" value="1"/>
</dbReference>
<dbReference type="Pfam" id="PF14732">
    <property type="entry name" value="UAE_UbL"/>
    <property type="match status" value="1"/>
</dbReference>
<dbReference type="Pfam" id="PF16195">
    <property type="entry name" value="UBA2_C"/>
    <property type="match status" value="1"/>
</dbReference>
<dbReference type="PIRSF" id="PIRSF039133">
    <property type="entry name" value="SUMO_E1B"/>
    <property type="match status" value="1"/>
</dbReference>
<dbReference type="SUPFAM" id="SSF69572">
    <property type="entry name" value="Activating enzymes of the ubiquitin-like proteins"/>
    <property type="match status" value="1"/>
</dbReference>
<dbReference type="PROSITE" id="PS00865">
    <property type="entry name" value="UBIQUITIN_ACTIVAT_2"/>
    <property type="match status" value="1"/>
</dbReference>
<accession>Q7ZY60</accession>
<feature type="chain" id="PRO_0000268874" description="SUMO-activating enzyme subunit 2-B">
    <location>
        <begin position="1"/>
        <end position="641"/>
    </location>
</feature>
<feature type="region of interest" description="Disordered" evidence="4">
    <location>
        <begin position="546"/>
        <end position="641"/>
    </location>
</feature>
<feature type="compositionally biased region" description="Basic and acidic residues" evidence="4">
    <location>
        <begin position="548"/>
        <end position="561"/>
    </location>
</feature>
<feature type="compositionally biased region" description="Polar residues" evidence="4">
    <location>
        <begin position="562"/>
        <end position="579"/>
    </location>
</feature>
<feature type="compositionally biased region" description="Acidic residues" evidence="4">
    <location>
        <begin position="582"/>
        <end position="594"/>
    </location>
</feature>
<feature type="compositionally biased region" description="Acidic residues" evidence="4">
    <location>
        <begin position="630"/>
        <end position="641"/>
    </location>
</feature>
<feature type="active site" description="Glycyl thioester intermediate" evidence="3">
    <location>
        <position position="173"/>
    </location>
</feature>
<feature type="binding site" evidence="1">
    <location>
        <begin position="24"/>
        <end position="29"/>
    </location>
    <ligand>
        <name>ATP</name>
        <dbReference type="ChEBI" id="CHEBI:30616"/>
    </ligand>
</feature>
<feature type="binding site" evidence="1">
    <location>
        <position position="48"/>
    </location>
    <ligand>
        <name>ATP</name>
        <dbReference type="ChEBI" id="CHEBI:30616"/>
    </ligand>
</feature>
<feature type="binding site" evidence="1">
    <location>
        <begin position="56"/>
        <end position="59"/>
    </location>
    <ligand>
        <name>ATP</name>
        <dbReference type="ChEBI" id="CHEBI:30616"/>
    </ligand>
</feature>
<feature type="binding site" evidence="1">
    <location>
        <position position="72"/>
    </location>
    <ligand>
        <name>ATP</name>
        <dbReference type="ChEBI" id="CHEBI:30616"/>
    </ligand>
</feature>
<feature type="binding site" evidence="1">
    <location>
        <begin position="95"/>
        <end position="96"/>
    </location>
    <ligand>
        <name>ATP</name>
        <dbReference type="ChEBI" id="CHEBI:30616"/>
    </ligand>
</feature>
<feature type="binding site" evidence="1">
    <location>
        <begin position="117"/>
        <end position="122"/>
    </location>
    <ligand>
        <name>ATP</name>
        <dbReference type="ChEBI" id="CHEBI:30616"/>
    </ligand>
</feature>
<feature type="binding site" evidence="1">
    <location>
        <position position="158"/>
    </location>
    <ligand>
        <name>Zn(2+)</name>
        <dbReference type="ChEBI" id="CHEBI:29105"/>
    </ligand>
</feature>
<feature type="binding site" evidence="1">
    <location>
        <position position="161"/>
    </location>
    <ligand>
        <name>Zn(2+)</name>
        <dbReference type="ChEBI" id="CHEBI:29105"/>
    </ligand>
</feature>
<feature type="binding site" evidence="1">
    <location>
        <position position="439"/>
    </location>
    <ligand>
        <name>Zn(2+)</name>
        <dbReference type="ChEBI" id="CHEBI:29105"/>
    </ligand>
</feature>
<feature type="binding site" evidence="1">
    <location>
        <position position="442"/>
    </location>
    <ligand>
        <name>Zn(2+)</name>
        <dbReference type="ChEBI" id="CHEBI:29105"/>
    </ligand>
</feature>
<evidence type="ECO:0000250" key="1"/>
<evidence type="ECO:0000250" key="2">
    <source>
        <dbReference type="UniProtKB" id="Q9UBT2"/>
    </source>
</evidence>
<evidence type="ECO:0000255" key="3">
    <source>
        <dbReference type="PROSITE-ProRule" id="PRU10132"/>
    </source>
</evidence>
<evidence type="ECO:0000256" key="4">
    <source>
        <dbReference type="SAM" id="MobiDB-lite"/>
    </source>
</evidence>
<evidence type="ECO:0000305" key="5"/>
<comment type="function">
    <text evidence="2">The heterodimer acts as an E1 ligase for sumo1, sumo2, and sumo3. It mediates ATP-dependent activation of sumo proteins followed by formation of a thioester bond between a sumo protein and a conserved active site cysteine residue on uba2/sae2 (By similarity).</text>
</comment>
<comment type="pathway">
    <text>Protein modification; protein sumoylation.</text>
</comment>
<comment type="subunit">
    <text evidence="1">Heterodimer of sae1 and uba2/sae2. The heterodimer corresponds to the two domains that are encoded on a single polypeptide chain in ubiquitin-activating enzyme E1. Interacts with ube2i (By similarity).</text>
</comment>
<comment type="subcellular location">
    <subcellularLocation>
        <location evidence="1">Nucleus</location>
    </subcellularLocation>
</comment>
<comment type="similarity">
    <text evidence="5">Belongs to the ubiquitin-activating E1 family.</text>
</comment>